<comment type="function">
    <text>Inhibitor of cathepsin D (aspartic protease). May also inhibit trypsin and chymotrypsin (serine proteases). Protects the plant by inhibiting proteases of invading organisms.</text>
</comment>
<comment type="subcellular location">
    <subcellularLocation>
        <location evidence="1">Vacuole</location>
    </subcellularLocation>
</comment>
<comment type="similarity">
    <text evidence="3">Belongs to the protease inhibitor I3 (leguminous Kunitz-type inhibitor) family.</text>
</comment>
<dbReference type="PIR" id="S24186">
    <property type="entry name" value="S24186"/>
</dbReference>
<dbReference type="SMR" id="P58519"/>
<dbReference type="STRING" id="4113.P58519"/>
<dbReference type="InParanoid" id="P58519"/>
<dbReference type="Proteomes" id="UP000011115">
    <property type="component" value="Unassembled WGS sequence"/>
</dbReference>
<dbReference type="ExpressionAtlas" id="P58519">
    <property type="expression patterns" value="baseline and differential"/>
</dbReference>
<dbReference type="GO" id="GO:0005773">
    <property type="term" value="C:vacuole"/>
    <property type="evidence" value="ECO:0007669"/>
    <property type="project" value="UniProtKB-SubCell"/>
</dbReference>
<dbReference type="GO" id="GO:0019828">
    <property type="term" value="F:aspartic-type endopeptidase inhibitor activity"/>
    <property type="evidence" value="ECO:0007669"/>
    <property type="project" value="UniProtKB-KW"/>
</dbReference>
<dbReference type="GO" id="GO:0004867">
    <property type="term" value="F:serine-type endopeptidase inhibitor activity"/>
    <property type="evidence" value="ECO:0007669"/>
    <property type="project" value="UniProtKB-KW"/>
</dbReference>
<dbReference type="CDD" id="cd23372">
    <property type="entry name" value="beta-trefoil_STI_CPI-like"/>
    <property type="match status" value="1"/>
</dbReference>
<dbReference type="Gene3D" id="2.80.10.50">
    <property type="match status" value="1"/>
</dbReference>
<dbReference type="InterPro" id="IPR011065">
    <property type="entry name" value="Kunitz_inhibitor_STI-like_sf"/>
</dbReference>
<dbReference type="InterPro" id="IPR002160">
    <property type="entry name" value="Prot_inh_Kunz-lg"/>
</dbReference>
<dbReference type="PANTHER" id="PTHR33107">
    <property type="entry name" value="KUNITZ TRYPSIN INHIBITOR 2"/>
    <property type="match status" value="1"/>
</dbReference>
<dbReference type="PANTHER" id="PTHR33107:SF38">
    <property type="entry name" value="SERINE PROTEASE INHIBITOR 5"/>
    <property type="match status" value="1"/>
</dbReference>
<dbReference type="Pfam" id="PF00197">
    <property type="entry name" value="Kunitz_legume"/>
    <property type="match status" value="1"/>
</dbReference>
<dbReference type="PRINTS" id="PR00291">
    <property type="entry name" value="KUNITZINHBTR"/>
</dbReference>
<dbReference type="SMART" id="SM00452">
    <property type="entry name" value="STI"/>
    <property type="match status" value="1"/>
</dbReference>
<dbReference type="SUPFAM" id="SSF50386">
    <property type="entry name" value="STI-like"/>
    <property type="match status" value="1"/>
</dbReference>
<dbReference type="PROSITE" id="PS00283">
    <property type="entry name" value="SOYBEAN_KUNITZ"/>
    <property type="match status" value="1"/>
</dbReference>
<organism>
    <name type="scientific">Solanum tuberosum</name>
    <name type="common">Potato</name>
    <dbReference type="NCBI Taxonomy" id="4113"/>
    <lineage>
        <taxon>Eukaryota</taxon>
        <taxon>Viridiplantae</taxon>
        <taxon>Streptophyta</taxon>
        <taxon>Embryophyta</taxon>
        <taxon>Tracheophyta</taxon>
        <taxon>Spermatophyta</taxon>
        <taxon>Magnoliopsida</taxon>
        <taxon>eudicotyledons</taxon>
        <taxon>Gunneridae</taxon>
        <taxon>Pentapetalae</taxon>
        <taxon>asterids</taxon>
        <taxon>lamiids</taxon>
        <taxon>Solanales</taxon>
        <taxon>Solanaceae</taxon>
        <taxon>Solanoideae</taxon>
        <taxon>Solaneae</taxon>
        <taxon>Solanum</taxon>
    </lineage>
</organism>
<reference key="1">
    <citation type="journal article" date="1992" name="Biol. Chem. Hoppe-Seyler">
        <title>Characterization of aspartic proteinase inhibitors from potato at the gene, cDNA and protein levels.</title>
        <authorList>
            <person name="Strukelj B."/>
            <person name="Pungercar J."/>
            <person name="Mesko P."/>
            <person name="Barlic-Maganja D."/>
            <person name="Gubensek F."/>
            <person name="Kregar I."/>
            <person name="Turk V."/>
        </authorList>
    </citation>
    <scope>NUCLEOTIDE SEQUENCE</scope>
    <source>
        <strain>cv. Pentland squire</strain>
        <tissue>Tuber</tissue>
    </source>
</reference>
<feature type="signal peptide" evidence="1">
    <location>
        <begin position="1"/>
        <end position="23"/>
    </location>
</feature>
<feature type="propeptide" id="PRO_0000016916" evidence="1">
    <location>
        <begin position="24"/>
        <end position="32"/>
    </location>
</feature>
<feature type="chain" id="PRO_0000016917" description="Aspartic protease inhibitor 5">
    <location>
        <begin position="33"/>
        <end position="220"/>
    </location>
</feature>
<feature type="short sequence motif" description="Vacuolar targeting signal" evidence="1">
    <location>
        <begin position="26"/>
        <end position="31"/>
    </location>
</feature>
<feature type="site" description="Reactive bond for trypsin" evidence="1">
    <location>
        <begin position="99"/>
        <end position="100"/>
    </location>
</feature>
<feature type="site" description="Reactive bond for chymotrypsin" evidence="1">
    <location>
        <begin position="143"/>
        <end position="144"/>
    </location>
</feature>
<feature type="glycosylation site" description="N-linked (GlcNAc...) asparagine" evidence="2">
    <location>
        <position position="51"/>
    </location>
</feature>
<feature type="disulfide bond" evidence="1">
    <location>
        <begin position="80"/>
        <end position="125"/>
    </location>
</feature>
<feature type="disulfide bond" evidence="1">
    <location>
        <begin position="174"/>
        <end position="185"/>
    </location>
</feature>
<accession>P58519</accession>
<keyword id="KW-0062">Aspartic protease inhibitor</keyword>
<keyword id="KW-1015">Disulfide bond</keyword>
<keyword id="KW-0325">Glycoprotein</keyword>
<keyword id="KW-0646">Protease inhibitor</keyword>
<keyword id="KW-1185">Reference proteome</keyword>
<keyword id="KW-0722">Serine protease inhibitor</keyword>
<keyword id="KW-0732">Signal</keyword>
<keyword id="KW-0926">Vacuole</keyword>
<protein>
    <recommendedName>
        <fullName>Aspartic protease inhibitor 5</fullName>
    </recommendedName>
    <alternativeName>
        <fullName>PI-13</fullName>
    </alternativeName>
    <alternativeName>
        <fullName>pi13</fullName>
    </alternativeName>
</protein>
<proteinExistence type="inferred from homology"/>
<evidence type="ECO:0000250" key="1"/>
<evidence type="ECO:0000255" key="2"/>
<evidence type="ECO:0000305" key="3"/>
<sequence>MMKCLFLLCLCLLPIVVFSSTFTSQNLIDLPSESPVPKPVLDTNGKELNPNSSYRIISIGRGALGGDVYLGKSPNSDAPCPDGVFRYNSDVGPSGTPVRFIPLSTNIFEDQLLNIQFNIPTVKLCVSYTIWKVGNLNAHLRTMLLETGGTIGQADSSYFKIVKSSKFGYNLLYCPITRHFLCPFCRDDNFCAKVGVVIQNGKRRLALVNENPLDVLFQEV</sequence>
<name>API5_SOLTU</name>